<keyword id="KW-0119">Carbohydrate metabolism</keyword>
<keyword id="KW-0413">Isomerase</keyword>
<keyword id="KW-0521">NADP</keyword>
<reference key="1">
    <citation type="submission" date="2007-02" db="EMBL/GenBank/DDBJ databases">
        <title>Complete sequence of chromosome of Yersinia pestis Pestoides F.</title>
        <authorList>
            <consortium name="US DOE Joint Genome Institute"/>
            <person name="Copeland A."/>
            <person name="Lucas S."/>
            <person name="Lapidus A."/>
            <person name="Barry K."/>
            <person name="Detter J.C."/>
            <person name="Glavina del Rio T."/>
            <person name="Hammon N."/>
            <person name="Israni S."/>
            <person name="Dalin E."/>
            <person name="Tice H."/>
            <person name="Pitluck S."/>
            <person name="Di Bartolo G."/>
            <person name="Chain P."/>
            <person name="Malfatti S."/>
            <person name="Shin M."/>
            <person name="Vergez L."/>
            <person name="Schmutz J."/>
            <person name="Larimer F."/>
            <person name="Land M."/>
            <person name="Hauser L."/>
            <person name="Worsham P."/>
            <person name="Chu M."/>
            <person name="Bearden S."/>
            <person name="Garcia E."/>
            <person name="Richardson P."/>
        </authorList>
    </citation>
    <scope>NUCLEOTIDE SEQUENCE [LARGE SCALE GENOMIC DNA]</scope>
    <source>
        <strain>Pestoides F</strain>
    </source>
</reference>
<sequence length="310" mass="34780">MIIVTGGAGFIGSNIVKALNNIGYKDILVVDNLKDGTKFVNLVDLDIADYMDKEDFVASIVAGDDMGDIDAIFHEGACSSTTEWDGKYMMDNNYQYSKDILHFCLDRSIPFLYASSAATYGGRTDNFIEDRQYEQPLNVYGYSKFLFDQYVREILPQADSQICGFRYFNVYGPREGHKGSMASVAFHLNNQINAGERPKLFAGSENFKRDFIYVGDVADVNLWFWQNGVSGIFNCGTGRAESFQAVADAVVDYHQSGPVEYIEFPEKLKGRYQAYTQADLTKLRAAGYGKPFKTVAEGVKEYLAWLNRSV</sequence>
<organism>
    <name type="scientific">Yersinia pestis (strain Pestoides F)</name>
    <dbReference type="NCBI Taxonomy" id="386656"/>
    <lineage>
        <taxon>Bacteria</taxon>
        <taxon>Pseudomonadati</taxon>
        <taxon>Pseudomonadota</taxon>
        <taxon>Gammaproteobacteria</taxon>
        <taxon>Enterobacterales</taxon>
        <taxon>Yersiniaceae</taxon>
        <taxon>Yersinia</taxon>
    </lineage>
</organism>
<gene>
    <name evidence="1" type="primary">hldD</name>
    <name type="ordered locus">YPDSF_3847</name>
</gene>
<name>HLDD_YERPP</name>
<protein>
    <recommendedName>
        <fullName evidence="1">ADP-L-glycero-D-manno-heptose-6-epimerase</fullName>
        <ecNumber evidence="1">5.1.3.20</ecNumber>
    </recommendedName>
    <alternativeName>
        <fullName evidence="1">ADP-L-glycero-beta-D-manno-heptose-6-epimerase</fullName>
        <shortName evidence="1">ADP-glyceromanno-heptose 6-epimerase</shortName>
        <shortName evidence="1">ADP-hep 6-epimerase</shortName>
        <shortName evidence="1">AGME</shortName>
    </alternativeName>
</protein>
<feature type="chain" id="PRO_1000069373" description="ADP-L-glycero-D-manno-heptose-6-epimerase">
    <location>
        <begin position="1"/>
        <end position="310"/>
    </location>
</feature>
<feature type="active site" description="Proton acceptor" evidence="1">
    <location>
        <position position="140"/>
    </location>
</feature>
<feature type="active site" description="Proton acceptor" evidence="1">
    <location>
        <position position="178"/>
    </location>
</feature>
<feature type="binding site" evidence="1">
    <location>
        <begin position="10"/>
        <end position="11"/>
    </location>
    <ligand>
        <name>NADP(+)</name>
        <dbReference type="ChEBI" id="CHEBI:58349"/>
    </ligand>
</feature>
<feature type="binding site" evidence="1">
    <location>
        <begin position="31"/>
        <end position="32"/>
    </location>
    <ligand>
        <name>NADP(+)</name>
        <dbReference type="ChEBI" id="CHEBI:58349"/>
    </ligand>
</feature>
<feature type="binding site" evidence="1">
    <location>
        <position position="38"/>
    </location>
    <ligand>
        <name>NADP(+)</name>
        <dbReference type="ChEBI" id="CHEBI:58349"/>
    </ligand>
</feature>
<feature type="binding site" evidence="1">
    <location>
        <position position="53"/>
    </location>
    <ligand>
        <name>NADP(+)</name>
        <dbReference type="ChEBI" id="CHEBI:58349"/>
    </ligand>
</feature>
<feature type="binding site" evidence="1">
    <location>
        <begin position="75"/>
        <end position="79"/>
    </location>
    <ligand>
        <name>NADP(+)</name>
        <dbReference type="ChEBI" id="CHEBI:58349"/>
    </ligand>
</feature>
<feature type="binding site" evidence="1">
    <location>
        <position position="92"/>
    </location>
    <ligand>
        <name>NADP(+)</name>
        <dbReference type="ChEBI" id="CHEBI:58349"/>
    </ligand>
</feature>
<feature type="binding site" evidence="1">
    <location>
        <position position="144"/>
    </location>
    <ligand>
        <name>NADP(+)</name>
        <dbReference type="ChEBI" id="CHEBI:58349"/>
    </ligand>
</feature>
<feature type="binding site" evidence="1">
    <location>
        <position position="169"/>
    </location>
    <ligand>
        <name>substrate</name>
    </ligand>
</feature>
<feature type="binding site" evidence="1">
    <location>
        <position position="170"/>
    </location>
    <ligand>
        <name>NADP(+)</name>
        <dbReference type="ChEBI" id="CHEBI:58349"/>
    </ligand>
</feature>
<feature type="binding site" evidence="1">
    <location>
        <position position="178"/>
    </location>
    <ligand>
        <name>NADP(+)</name>
        <dbReference type="ChEBI" id="CHEBI:58349"/>
    </ligand>
</feature>
<feature type="binding site" evidence="1">
    <location>
        <position position="180"/>
    </location>
    <ligand>
        <name>substrate</name>
    </ligand>
</feature>
<feature type="binding site" evidence="1">
    <location>
        <position position="187"/>
    </location>
    <ligand>
        <name>substrate</name>
    </ligand>
</feature>
<feature type="binding site" evidence="1">
    <location>
        <begin position="201"/>
        <end position="204"/>
    </location>
    <ligand>
        <name>substrate</name>
    </ligand>
</feature>
<feature type="binding site" evidence="1">
    <location>
        <position position="209"/>
    </location>
    <ligand>
        <name>substrate</name>
    </ligand>
</feature>
<feature type="binding site" evidence="1">
    <location>
        <position position="272"/>
    </location>
    <ligand>
        <name>substrate</name>
    </ligand>
</feature>
<dbReference type="EC" id="5.1.3.20" evidence="1"/>
<dbReference type="EMBL" id="CP000668">
    <property type="protein sequence ID" value="ABP42190.1"/>
    <property type="molecule type" value="Genomic_DNA"/>
</dbReference>
<dbReference type="SMR" id="A4TSC8"/>
<dbReference type="KEGG" id="ypp:YPDSF_3847"/>
<dbReference type="PATRIC" id="fig|386656.14.peg.671"/>
<dbReference type="UniPathway" id="UPA00356">
    <property type="reaction ID" value="UER00440"/>
</dbReference>
<dbReference type="GO" id="GO:0008712">
    <property type="term" value="F:ADP-glyceromanno-heptose 6-epimerase activity"/>
    <property type="evidence" value="ECO:0007669"/>
    <property type="project" value="UniProtKB-UniRule"/>
</dbReference>
<dbReference type="GO" id="GO:0050661">
    <property type="term" value="F:NADP binding"/>
    <property type="evidence" value="ECO:0007669"/>
    <property type="project" value="InterPro"/>
</dbReference>
<dbReference type="GO" id="GO:0097171">
    <property type="term" value="P:ADP-L-glycero-beta-D-manno-heptose biosynthetic process"/>
    <property type="evidence" value="ECO:0007669"/>
    <property type="project" value="UniProtKB-UniPathway"/>
</dbReference>
<dbReference type="GO" id="GO:0005975">
    <property type="term" value="P:carbohydrate metabolic process"/>
    <property type="evidence" value="ECO:0007669"/>
    <property type="project" value="UniProtKB-UniRule"/>
</dbReference>
<dbReference type="CDD" id="cd05248">
    <property type="entry name" value="ADP_GME_SDR_e"/>
    <property type="match status" value="1"/>
</dbReference>
<dbReference type="Gene3D" id="3.40.50.720">
    <property type="entry name" value="NAD(P)-binding Rossmann-like Domain"/>
    <property type="match status" value="1"/>
</dbReference>
<dbReference type="Gene3D" id="3.90.25.10">
    <property type="entry name" value="UDP-galactose 4-epimerase, domain 1"/>
    <property type="match status" value="1"/>
</dbReference>
<dbReference type="HAMAP" id="MF_01601">
    <property type="entry name" value="Heptose_epimerase"/>
    <property type="match status" value="1"/>
</dbReference>
<dbReference type="InterPro" id="IPR001509">
    <property type="entry name" value="Epimerase_deHydtase"/>
</dbReference>
<dbReference type="InterPro" id="IPR011912">
    <property type="entry name" value="Heptose_epim"/>
</dbReference>
<dbReference type="InterPro" id="IPR036291">
    <property type="entry name" value="NAD(P)-bd_dom_sf"/>
</dbReference>
<dbReference type="NCBIfam" id="TIGR02197">
    <property type="entry name" value="heptose_epim"/>
    <property type="match status" value="1"/>
</dbReference>
<dbReference type="NCBIfam" id="NF008360">
    <property type="entry name" value="PRK11150.1"/>
    <property type="match status" value="1"/>
</dbReference>
<dbReference type="PANTHER" id="PTHR43103:SF3">
    <property type="entry name" value="ADP-L-GLYCERO-D-MANNO-HEPTOSE-6-EPIMERASE"/>
    <property type="match status" value="1"/>
</dbReference>
<dbReference type="PANTHER" id="PTHR43103">
    <property type="entry name" value="NUCLEOSIDE-DIPHOSPHATE-SUGAR EPIMERASE"/>
    <property type="match status" value="1"/>
</dbReference>
<dbReference type="Pfam" id="PF01370">
    <property type="entry name" value="Epimerase"/>
    <property type="match status" value="1"/>
</dbReference>
<dbReference type="SUPFAM" id="SSF51735">
    <property type="entry name" value="NAD(P)-binding Rossmann-fold domains"/>
    <property type="match status" value="1"/>
</dbReference>
<accession>A4TSC8</accession>
<comment type="function">
    <text evidence="1">Catalyzes the interconversion between ADP-D-glycero-beta-D-manno-heptose and ADP-L-glycero-beta-D-manno-heptose via an epimerization at carbon 6 of the heptose.</text>
</comment>
<comment type="catalytic activity">
    <reaction evidence="1">
        <text>ADP-D-glycero-beta-D-manno-heptose = ADP-L-glycero-beta-D-manno-heptose</text>
        <dbReference type="Rhea" id="RHEA:17577"/>
        <dbReference type="ChEBI" id="CHEBI:59967"/>
        <dbReference type="ChEBI" id="CHEBI:61506"/>
        <dbReference type="EC" id="5.1.3.20"/>
    </reaction>
</comment>
<comment type="cofactor">
    <cofactor evidence="1">
        <name>NADP(+)</name>
        <dbReference type="ChEBI" id="CHEBI:58349"/>
    </cofactor>
    <text evidence="1">Binds 1 NADP(+) per subunit.</text>
</comment>
<comment type="pathway">
    <text evidence="1">Nucleotide-sugar biosynthesis; ADP-L-glycero-beta-D-manno-heptose biosynthesis; ADP-L-glycero-beta-D-manno-heptose from D-glycero-beta-D-manno-heptose 7-phosphate: step 4/4.</text>
</comment>
<comment type="subunit">
    <text evidence="1">Homopentamer.</text>
</comment>
<comment type="domain">
    <text evidence="1">Contains a large N-terminal NADP-binding domain, and a smaller C-terminal substrate-binding domain.</text>
</comment>
<comment type="similarity">
    <text evidence="1">Belongs to the NAD(P)-dependent epimerase/dehydratase family. HldD subfamily.</text>
</comment>
<evidence type="ECO:0000255" key="1">
    <source>
        <dbReference type="HAMAP-Rule" id="MF_01601"/>
    </source>
</evidence>
<proteinExistence type="inferred from homology"/>